<comment type="function">
    <text evidence="1">Odorant receptor which mediates acceptance or avoidance behavior, depending on its substrates. The odorant receptor repertoire encodes a large collection of odor stimuli that vary widely in identity, intensity, and duration. May form a complex with Orco to form odorant-sensing units, providing sensitive and prolonged odorant signaling and calcium permeability (By similarity).</text>
</comment>
<comment type="subunit">
    <text evidence="1">Interacts with Orco. Complexes exist early in the endomembrane system in olfactory sensory neurons (OSNs), coupling these complexes to the conserved ciliary trafficking pathway (By similarity).</text>
</comment>
<comment type="subcellular location">
    <subcellularLocation>
        <location evidence="1">Cell membrane</location>
        <topology evidence="1">Multi-pass membrane protein</topology>
    </subcellularLocation>
</comment>
<comment type="tissue specificity">
    <text evidence="3">Expressed in olfactory sensory neurons in the antenna.</text>
</comment>
<comment type="miscellaneous">
    <text>The atypical heteromeric and topological design of the odorant receptors appears to be an insect-specific solution for odor recognition, making the OR/Orco complex an attractive target for the development of highly selective insect repellents to disrupt olfactory-mediated host-seeking behaviors of insect disease vectors. Odor-evoked OR currents are independent of known G-protein-coupled second messenger pathways.</text>
</comment>
<comment type="similarity">
    <text evidence="4">Belongs to the insect chemoreceptor superfamily. Heteromeric odorant receptor channel (TC 1.A.69) family. Or67d subfamily.</text>
</comment>
<organism>
    <name type="scientific">Drosophila melanogaster</name>
    <name type="common">Fruit fly</name>
    <dbReference type="NCBI Taxonomy" id="7227"/>
    <lineage>
        <taxon>Eukaryota</taxon>
        <taxon>Metazoa</taxon>
        <taxon>Ecdysozoa</taxon>
        <taxon>Arthropoda</taxon>
        <taxon>Hexapoda</taxon>
        <taxon>Insecta</taxon>
        <taxon>Pterygota</taxon>
        <taxon>Neoptera</taxon>
        <taxon>Endopterygota</taxon>
        <taxon>Diptera</taxon>
        <taxon>Brachycera</taxon>
        <taxon>Muscomorpha</taxon>
        <taxon>Ephydroidea</taxon>
        <taxon>Drosophilidae</taxon>
        <taxon>Drosophila</taxon>
        <taxon>Sophophora</taxon>
    </lineage>
</organism>
<keyword id="KW-1003">Cell membrane</keyword>
<keyword id="KW-0472">Membrane</keyword>
<keyword id="KW-0552">Olfaction</keyword>
<keyword id="KW-0675">Receptor</keyword>
<keyword id="KW-1185">Reference proteome</keyword>
<keyword id="KW-0716">Sensory transduction</keyword>
<keyword id="KW-0807">Transducer</keyword>
<keyword id="KW-0812">Transmembrane</keyword>
<keyword id="KW-1133">Transmembrane helix</keyword>
<reference key="1">
    <citation type="journal article" date="2000" name="Science">
        <title>The genome sequence of Drosophila melanogaster.</title>
        <authorList>
            <person name="Adams M.D."/>
            <person name="Celniker S.E."/>
            <person name="Holt R.A."/>
            <person name="Evans C.A."/>
            <person name="Gocayne J.D."/>
            <person name="Amanatides P.G."/>
            <person name="Scherer S.E."/>
            <person name="Li P.W."/>
            <person name="Hoskins R.A."/>
            <person name="Galle R.F."/>
            <person name="George R.A."/>
            <person name="Lewis S.E."/>
            <person name="Richards S."/>
            <person name="Ashburner M."/>
            <person name="Henderson S.N."/>
            <person name="Sutton G.G."/>
            <person name="Wortman J.R."/>
            <person name="Yandell M.D."/>
            <person name="Zhang Q."/>
            <person name="Chen L.X."/>
            <person name="Brandon R.C."/>
            <person name="Rogers Y.-H.C."/>
            <person name="Blazej R.G."/>
            <person name="Champe M."/>
            <person name="Pfeiffer B.D."/>
            <person name="Wan K.H."/>
            <person name="Doyle C."/>
            <person name="Baxter E.G."/>
            <person name="Helt G."/>
            <person name="Nelson C.R."/>
            <person name="Miklos G.L.G."/>
            <person name="Abril J.F."/>
            <person name="Agbayani A."/>
            <person name="An H.-J."/>
            <person name="Andrews-Pfannkoch C."/>
            <person name="Baldwin D."/>
            <person name="Ballew R.M."/>
            <person name="Basu A."/>
            <person name="Baxendale J."/>
            <person name="Bayraktaroglu L."/>
            <person name="Beasley E.M."/>
            <person name="Beeson K.Y."/>
            <person name="Benos P.V."/>
            <person name="Berman B.P."/>
            <person name="Bhandari D."/>
            <person name="Bolshakov S."/>
            <person name="Borkova D."/>
            <person name="Botchan M.R."/>
            <person name="Bouck J."/>
            <person name="Brokstein P."/>
            <person name="Brottier P."/>
            <person name="Burtis K.C."/>
            <person name="Busam D.A."/>
            <person name="Butler H."/>
            <person name="Cadieu E."/>
            <person name="Center A."/>
            <person name="Chandra I."/>
            <person name="Cherry J.M."/>
            <person name="Cawley S."/>
            <person name="Dahlke C."/>
            <person name="Davenport L.B."/>
            <person name="Davies P."/>
            <person name="de Pablos B."/>
            <person name="Delcher A."/>
            <person name="Deng Z."/>
            <person name="Mays A.D."/>
            <person name="Dew I."/>
            <person name="Dietz S.M."/>
            <person name="Dodson K."/>
            <person name="Doup L.E."/>
            <person name="Downes M."/>
            <person name="Dugan-Rocha S."/>
            <person name="Dunkov B.C."/>
            <person name="Dunn P."/>
            <person name="Durbin K.J."/>
            <person name="Evangelista C.C."/>
            <person name="Ferraz C."/>
            <person name="Ferriera S."/>
            <person name="Fleischmann W."/>
            <person name="Fosler C."/>
            <person name="Gabrielian A.E."/>
            <person name="Garg N.S."/>
            <person name="Gelbart W.M."/>
            <person name="Glasser K."/>
            <person name="Glodek A."/>
            <person name="Gong F."/>
            <person name="Gorrell J.H."/>
            <person name="Gu Z."/>
            <person name="Guan P."/>
            <person name="Harris M."/>
            <person name="Harris N.L."/>
            <person name="Harvey D.A."/>
            <person name="Heiman T.J."/>
            <person name="Hernandez J.R."/>
            <person name="Houck J."/>
            <person name="Hostin D."/>
            <person name="Houston K.A."/>
            <person name="Howland T.J."/>
            <person name="Wei M.-H."/>
            <person name="Ibegwam C."/>
            <person name="Jalali M."/>
            <person name="Kalush F."/>
            <person name="Karpen G.H."/>
            <person name="Ke Z."/>
            <person name="Kennison J.A."/>
            <person name="Ketchum K.A."/>
            <person name="Kimmel B.E."/>
            <person name="Kodira C.D."/>
            <person name="Kraft C.L."/>
            <person name="Kravitz S."/>
            <person name="Kulp D."/>
            <person name="Lai Z."/>
            <person name="Lasko P."/>
            <person name="Lei Y."/>
            <person name="Levitsky A.A."/>
            <person name="Li J.H."/>
            <person name="Li Z."/>
            <person name="Liang Y."/>
            <person name="Lin X."/>
            <person name="Liu X."/>
            <person name="Mattei B."/>
            <person name="McIntosh T.C."/>
            <person name="McLeod M.P."/>
            <person name="McPherson D."/>
            <person name="Merkulov G."/>
            <person name="Milshina N.V."/>
            <person name="Mobarry C."/>
            <person name="Morris J."/>
            <person name="Moshrefi A."/>
            <person name="Mount S.M."/>
            <person name="Moy M."/>
            <person name="Murphy B."/>
            <person name="Murphy L."/>
            <person name="Muzny D.M."/>
            <person name="Nelson D.L."/>
            <person name="Nelson D.R."/>
            <person name="Nelson K.A."/>
            <person name="Nixon K."/>
            <person name="Nusskern D.R."/>
            <person name="Pacleb J.M."/>
            <person name="Palazzolo M."/>
            <person name="Pittman G.S."/>
            <person name="Pan S."/>
            <person name="Pollard J."/>
            <person name="Puri V."/>
            <person name="Reese M.G."/>
            <person name="Reinert K."/>
            <person name="Remington K."/>
            <person name="Saunders R.D.C."/>
            <person name="Scheeler F."/>
            <person name="Shen H."/>
            <person name="Shue B.C."/>
            <person name="Siden-Kiamos I."/>
            <person name="Simpson M."/>
            <person name="Skupski M.P."/>
            <person name="Smith T.J."/>
            <person name="Spier E."/>
            <person name="Spradling A.C."/>
            <person name="Stapleton M."/>
            <person name="Strong R."/>
            <person name="Sun E."/>
            <person name="Svirskas R."/>
            <person name="Tector C."/>
            <person name="Turner R."/>
            <person name="Venter E."/>
            <person name="Wang A.H."/>
            <person name="Wang X."/>
            <person name="Wang Z.-Y."/>
            <person name="Wassarman D.A."/>
            <person name="Weinstock G.M."/>
            <person name="Weissenbach J."/>
            <person name="Williams S.M."/>
            <person name="Woodage T."/>
            <person name="Worley K.C."/>
            <person name="Wu D."/>
            <person name="Yang S."/>
            <person name="Yao Q.A."/>
            <person name="Ye J."/>
            <person name="Yeh R.-F."/>
            <person name="Zaveri J.S."/>
            <person name="Zhan M."/>
            <person name="Zhang G."/>
            <person name="Zhao Q."/>
            <person name="Zheng L."/>
            <person name="Zheng X.H."/>
            <person name="Zhong F.N."/>
            <person name="Zhong W."/>
            <person name="Zhou X."/>
            <person name="Zhu S.C."/>
            <person name="Zhu X."/>
            <person name="Smith H.O."/>
            <person name="Gibbs R.A."/>
            <person name="Myers E.W."/>
            <person name="Rubin G.M."/>
            <person name="Venter J.C."/>
        </authorList>
    </citation>
    <scope>NUCLEOTIDE SEQUENCE [LARGE SCALE GENOMIC DNA]</scope>
    <source>
        <strain>Berkeley</strain>
    </source>
</reference>
<reference key="2">
    <citation type="journal article" date="2002" name="Genome Biol.">
        <title>Annotation of the Drosophila melanogaster euchromatic genome: a systematic review.</title>
        <authorList>
            <person name="Misra S."/>
            <person name="Crosby M.A."/>
            <person name="Mungall C.J."/>
            <person name="Matthews B.B."/>
            <person name="Campbell K.S."/>
            <person name="Hradecky P."/>
            <person name="Huang Y."/>
            <person name="Kaminker J.S."/>
            <person name="Millburn G.H."/>
            <person name="Prochnik S.E."/>
            <person name="Smith C.D."/>
            <person name="Tupy J.L."/>
            <person name="Whitfield E.J."/>
            <person name="Bayraktaroglu L."/>
            <person name="Berman B.P."/>
            <person name="Bettencourt B.R."/>
            <person name="Celniker S.E."/>
            <person name="de Grey A.D.N.J."/>
            <person name="Drysdale R.A."/>
            <person name="Harris N.L."/>
            <person name="Richter J."/>
            <person name="Russo S."/>
            <person name="Schroeder A.J."/>
            <person name="Shu S.Q."/>
            <person name="Stapleton M."/>
            <person name="Yamada C."/>
            <person name="Ashburner M."/>
            <person name="Gelbart W.M."/>
            <person name="Rubin G.M."/>
            <person name="Lewis S.E."/>
        </authorList>
    </citation>
    <scope>GENOME REANNOTATION</scope>
    <source>
        <strain>Berkeley</strain>
    </source>
</reference>
<reference key="3">
    <citation type="journal article" date="2000" name="Cell">
        <title>An olfactory sensory map in the fly brain.</title>
        <authorList>
            <person name="Vosshall L.B."/>
            <person name="Wong A.M."/>
            <person name="Axel R."/>
        </authorList>
    </citation>
    <scope>TISSUE SPECIFICITY</scope>
</reference>
<evidence type="ECO:0000250" key="1"/>
<evidence type="ECO:0000255" key="2"/>
<evidence type="ECO:0000269" key="3">
    <source>
    </source>
</evidence>
<evidence type="ECO:0000305" key="4"/>
<feature type="chain" id="PRO_0000174273" description="Putative odorant receptor 83c">
    <location>
        <begin position="1"/>
        <end position="397"/>
    </location>
</feature>
<feature type="topological domain" description="Cytoplasmic" evidence="2">
    <location>
        <begin position="1"/>
        <end position="39"/>
    </location>
</feature>
<feature type="transmembrane region" description="Helical; Name=1" evidence="2">
    <location>
        <begin position="40"/>
        <end position="60"/>
    </location>
</feature>
<feature type="topological domain" description="Extracellular" evidence="2">
    <location>
        <begin position="61"/>
        <end position="70"/>
    </location>
</feature>
<feature type="transmembrane region" description="Helical; Name=2" evidence="2">
    <location>
        <begin position="71"/>
        <end position="90"/>
    </location>
</feature>
<feature type="topological domain" description="Cytoplasmic" evidence="2">
    <location>
        <begin position="91"/>
        <end position="136"/>
    </location>
</feature>
<feature type="transmembrane region" description="Helical; Name=3" evidence="2">
    <location>
        <begin position="137"/>
        <end position="157"/>
    </location>
</feature>
<feature type="topological domain" description="Extracellular" evidence="2">
    <location>
        <begin position="158"/>
        <end position="186"/>
    </location>
</feature>
<feature type="transmembrane region" description="Helical; Name=4" evidence="2">
    <location>
        <begin position="187"/>
        <end position="207"/>
    </location>
</feature>
<feature type="topological domain" description="Cytoplasmic" evidence="2">
    <location>
        <begin position="208"/>
        <end position="282"/>
    </location>
</feature>
<feature type="transmembrane region" description="Helical; Name=5" evidence="2">
    <location>
        <begin position="283"/>
        <end position="299"/>
    </location>
</feature>
<feature type="topological domain" description="Extracellular" evidence="2">
    <location>
        <begin position="300"/>
        <end position="305"/>
    </location>
</feature>
<feature type="transmembrane region" description="Helical; Name=6" evidence="2">
    <location>
        <begin position="306"/>
        <end position="326"/>
    </location>
</feature>
<feature type="topological domain" description="Cytoplasmic" evidence="2">
    <location>
        <begin position="327"/>
        <end position="365"/>
    </location>
</feature>
<feature type="transmembrane region" description="Helical; Name=7" evidence="2">
    <location>
        <begin position="366"/>
        <end position="386"/>
    </location>
</feature>
<feature type="topological domain" description="Extracellular" evidence="2">
    <location>
        <begin position="387"/>
        <end position="397"/>
    </location>
</feature>
<dbReference type="EMBL" id="AE014297">
    <property type="protein sequence ID" value="AAF51921.2"/>
    <property type="molecule type" value="Genomic_DNA"/>
</dbReference>
<dbReference type="RefSeq" id="NP_524244.2">
    <property type="nucleotide sequence ID" value="NM_079520.3"/>
</dbReference>
<dbReference type="SMR" id="Q9VNK9"/>
<dbReference type="BioGRID" id="65948">
    <property type="interactions" value="3"/>
</dbReference>
<dbReference type="FunCoup" id="Q9VNK9">
    <property type="interactions" value="23"/>
</dbReference>
<dbReference type="IntAct" id="Q9VNK9">
    <property type="interactions" value="1"/>
</dbReference>
<dbReference type="STRING" id="7227.FBpp0078269"/>
<dbReference type="PaxDb" id="7227-FBpp0078269"/>
<dbReference type="EnsemblMetazoa" id="FBtr0078620">
    <property type="protein sequence ID" value="FBpp0078269"/>
    <property type="gene ID" value="FBgn0037399"/>
</dbReference>
<dbReference type="GeneID" id="40744"/>
<dbReference type="KEGG" id="dme:Dmel_CG15581"/>
<dbReference type="AGR" id="FB:FBgn0037399"/>
<dbReference type="CTD" id="40744"/>
<dbReference type="FlyBase" id="FBgn0037399">
    <property type="gene designation" value="Or83c"/>
</dbReference>
<dbReference type="VEuPathDB" id="VectorBase:FBgn0037399"/>
<dbReference type="eggNOG" id="ENOG502T8K5">
    <property type="taxonomic scope" value="Eukaryota"/>
</dbReference>
<dbReference type="GeneTree" id="ENSGT00530000064384"/>
<dbReference type="HOGENOM" id="CLU_694977_0_0_1"/>
<dbReference type="InParanoid" id="Q9VNK9"/>
<dbReference type="OMA" id="YSMSIYC"/>
<dbReference type="OrthoDB" id="6765072at2759"/>
<dbReference type="PhylomeDB" id="Q9VNK9"/>
<dbReference type="BioGRID-ORCS" id="40744">
    <property type="hits" value="0 hits in 1 CRISPR screen"/>
</dbReference>
<dbReference type="GenomeRNAi" id="40744"/>
<dbReference type="PRO" id="PR:Q9VNK9"/>
<dbReference type="Proteomes" id="UP000000803">
    <property type="component" value="Chromosome 3R"/>
</dbReference>
<dbReference type="Bgee" id="FBgn0037399">
    <property type="expression patterns" value="Expressed in seminal fluid secreting gland and 3 other cell types or tissues"/>
</dbReference>
<dbReference type="ExpressionAtlas" id="Q9VNK9">
    <property type="expression patterns" value="baseline and differential"/>
</dbReference>
<dbReference type="GO" id="GO:0034703">
    <property type="term" value="C:cation channel complex"/>
    <property type="evidence" value="ECO:0000250"/>
    <property type="project" value="FlyBase"/>
</dbReference>
<dbReference type="GO" id="GO:0032590">
    <property type="term" value="C:dendrite membrane"/>
    <property type="evidence" value="ECO:0000250"/>
    <property type="project" value="FlyBase"/>
</dbReference>
<dbReference type="GO" id="GO:0005886">
    <property type="term" value="C:plasma membrane"/>
    <property type="evidence" value="ECO:0000250"/>
    <property type="project" value="FlyBase"/>
</dbReference>
<dbReference type="GO" id="GO:0170020">
    <property type="term" value="F:ionotropic olfactory receptor activity"/>
    <property type="evidence" value="ECO:0000250"/>
    <property type="project" value="FlyBase"/>
</dbReference>
<dbReference type="GO" id="GO:0005549">
    <property type="term" value="F:odorant binding"/>
    <property type="evidence" value="ECO:0000250"/>
    <property type="project" value="FlyBase"/>
</dbReference>
<dbReference type="GO" id="GO:0004984">
    <property type="term" value="F:olfactory receptor activity"/>
    <property type="evidence" value="ECO:0000318"/>
    <property type="project" value="GO_Central"/>
</dbReference>
<dbReference type="GO" id="GO:0050911">
    <property type="term" value="P:detection of chemical stimulus involved in sensory perception of smell"/>
    <property type="evidence" value="ECO:0000315"/>
    <property type="project" value="FlyBase"/>
</dbReference>
<dbReference type="GO" id="GO:0007165">
    <property type="term" value="P:signal transduction"/>
    <property type="evidence" value="ECO:0007669"/>
    <property type="project" value="UniProtKB-KW"/>
</dbReference>
<dbReference type="InterPro" id="IPR004117">
    <property type="entry name" value="7tm6_olfct_rcpt"/>
</dbReference>
<dbReference type="PANTHER" id="PTHR21137">
    <property type="entry name" value="ODORANT RECEPTOR"/>
    <property type="match status" value="1"/>
</dbReference>
<dbReference type="PANTHER" id="PTHR21137:SF35">
    <property type="entry name" value="ODORANT RECEPTOR 19A-RELATED"/>
    <property type="match status" value="1"/>
</dbReference>
<dbReference type="Pfam" id="PF02949">
    <property type="entry name" value="7tm_6"/>
    <property type="match status" value="1"/>
</dbReference>
<accession>Q9VNK9</accession>
<protein>
    <recommendedName>
        <fullName>Putative odorant receptor 83c</fullName>
    </recommendedName>
</protein>
<proteinExistence type="evidence at transcript level"/>
<sequence length="397" mass="45487">MSTSESPSSRFRELSKYINSLTNLLGVDFLSPKLKFNYRTWTTIFAIANYTGFTVFTILNNGGDWRVGLKASLMTGGLFHGLGKFLTCLLKHQDMRRLVLYSQSIYDEYETRGDSYHRTLNSNIDRLLGIMKIIRNGYVFAFCLMELLPLAMLMYDGTRVTAMQYLIPGLPLENNYCYVVTYMIQTVTMLVQGVGFYSGDLFVFLGLTQILTFADMLQVKVKELNDALEQKAEYRALVRVGASIDGAENRQRLLLDVIRWHQLFTDYCRAINALYYELIATQVLSMALAMMLSFCINLSSFHMPSAIFFVVSAYSMSIYCILGTILEFAYDQVYESICNVTWYELSGEQRKLFGFLLRESQYPHNIQILGVMSLSVRTALQIVKLIYSVSMMMMNRA</sequence>
<gene>
    <name type="primary">Or83c</name>
    <name type="ORF">CG15581</name>
</gene>
<name>OR83C_DROME</name>